<gene>
    <name evidence="1" type="primary">rsmB</name>
    <name evidence="1" type="synonym">sun</name>
    <name type="ordered locus">YpsIP31758_3884</name>
</gene>
<proteinExistence type="inferred from homology"/>
<accession>A7FNK4</accession>
<comment type="function">
    <text evidence="1">Specifically methylates the cytosine at position 967 (m5C967) of 16S rRNA.</text>
</comment>
<comment type="catalytic activity">
    <reaction evidence="1">
        <text>cytidine(967) in 16S rRNA + S-adenosyl-L-methionine = 5-methylcytidine(967) in 16S rRNA + S-adenosyl-L-homocysteine + H(+)</text>
        <dbReference type="Rhea" id="RHEA:42748"/>
        <dbReference type="Rhea" id="RHEA-COMP:10219"/>
        <dbReference type="Rhea" id="RHEA-COMP:10220"/>
        <dbReference type="ChEBI" id="CHEBI:15378"/>
        <dbReference type="ChEBI" id="CHEBI:57856"/>
        <dbReference type="ChEBI" id="CHEBI:59789"/>
        <dbReference type="ChEBI" id="CHEBI:74483"/>
        <dbReference type="ChEBI" id="CHEBI:82748"/>
        <dbReference type="EC" id="2.1.1.176"/>
    </reaction>
</comment>
<comment type="subcellular location">
    <subcellularLocation>
        <location evidence="1">Cytoplasm</location>
    </subcellularLocation>
</comment>
<comment type="similarity">
    <text evidence="1">Belongs to the class I-like SAM-binding methyltransferase superfamily. RsmB/NOP family.</text>
</comment>
<organism>
    <name type="scientific">Yersinia pseudotuberculosis serotype O:1b (strain IP 31758)</name>
    <dbReference type="NCBI Taxonomy" id="349747"/>
    <lineage>
        <taxon>Bacteria</taxon>
        <taxon>Pseudomonadati</taxon>
        <taxon>Pseudomonadota</taxon>
        <taxon>Gammaproteobacteria</taxon>
        <taxon>Enterobacterales</taxon>
        <taxon>Yersiniaceae</taxon>
        <taxon>Yersinia</taxon>
    </lineage>
</organism>
<evidence type="ECO:0000255" key="1">
    <source>
        <dbReference type="HAMAP-Rule" id="MF_01856"/>
    </source>
</evidence>
<reference key="1">
    <citation type="journal article" date="2007" name="PLoS Genet.">
        <title>The complete genome sequence of Yersinia pseudotuberculosis IP31758, the causative agent of Far East scarlet-like fever.</title>
        <authorList>
            <person name="Eppinger M."/>
            <person name="Rosovitz M.J."/>
            <person name="Fricke W.F."/>
            <person name="Rasko D.A."/>
            <person name="Kokorina G."/>
            <person name="Fayolle C."/>
            <person name="Lindler L.E."/>
            <person name="Carniel E."/>
            <person name="Ravel J."/>
        </authorList>
    </citation>
    <scope>NUCLEOTIDE SEQUENCE [LARGE SCALE GENOMIC DNA]</scope>
    <source>
        <strain>IP 31758</strain>
    </source>
</reference>
<sequence>MKNTYNLRSIAAKAISQVLDQGQSLSAVLPELQKNISDKDRALLQELCFGTLRVLPQLEWCIQQLMARPMTGKQRVFHYLIMVGLYQLIYTRIPPHAALAETVEGATVLKRPQLKGLINGVLRQFQRQQVELLERAVNNDSHYLHPSWLLARIKQAYPAQWQQILDANNQRPPMWLRVNRLHHSRSEYLELLTQADINAEPHPIYRDAVRLITPCAVNHLPGFELGWVTVQDASAQGCVDLLDPQNGEQILDLCAAPGGKTTHILEAAPKAHVLAVDIDEQRLSRVKENLQRLQLQAVVRVGDGRAPDTWCGDQQFDRILLDAPCSATGVIRRHPDIKWLRRDRDISELAQLQSEIIEAIWPKLKHGGVLVYATCSILPEENQQQIAAFLQRHPEAQLTETGTTAAPGKQNLPHPEDGDGFFYAKIIKK</sequence>
<dbReference type="EC" id="2.1.1.176" evidence="1"/>
<dbReference type="EMBL" id="CP000720">
    <property type="protein sequence ID" value="ABS46701.1"/>
    <property type="molecule type" value="Genomic_DNA"/>
</dbReference>
<dbReference type="RefSeq" id="WP_002215705.1">
    <property type="nucleotide sequence ID" value="NC_009708.1"/>
</dbReference>
<dbReference type="SMR" id="A7FNK4"/>
<dbReference type="GeneID" id="57974364"/>
<dbReference type="KEGG" id="ypi:YpsIP31758_3884"/>
<dbReference type="HOGENOM" id="CLU_005316_0_4_6"/>
<dbReference type="Proteomes" id="UP000002412">
    <property type="component" value="Chromosome"/>
</dbReference>
<dbReference type="GO" id="GO:0005829">
    <property type="term" value="C:cytosol"/>
    <property type="evidence" value="ECO:0007669"/>
    <property type="project" value="TreeGrafter"/>
</dbReference>
<dbReference type="GO" id="GO:0003723">
    <property type="term" value="F:RNA binding"/>
    <property type="evidence" value="ECO:0007669"/>
    <property type="project" value="UniProtKB-KW"/>
</dbReference>
<dbReference type="GO" id="GO:0009383">
    <property type="term" value="F:rRNA (cytosine-C5-)-methyltransferase activity"/>
    <property type="evidence" value="ECO:0007669"/>
    <property type="project" value="TreeGrafter"/>
</dbReference>
<dbReference type="GO" id="GO:0006355">
    <property type="term" value="P:regulation of DNA-templated transcription"/>
    <property type="evidence" value="ECO:0007669"/>
    <property type="project" value="InterPro"/>
</dbReference>
<dbReference type="GO" id="GO:0070475">
    <property type="term" value="P:rRNA base methylation"/>
    <property type="evidence" value="ECO:0007669"/>
    <property type="project" value="TreeGrafter"/>
</dbReference>
<dbReference type="CDD" id="cd02440">
    <property type="entry name" value="AdoMet_MTases"/>
    <property type="match status" value="1"/>
</dbReference>
<dbReference type="CDD" id="cd00620">
    <property type="entry name" value="Methyltransferase_Sun"/>
    <property type="match status" value="1"/>
</dbReference>
<dbReference type="FunFam" id="1.10.287.730:FF:000001">
    <property type="entry name" value="Ribosomal RNA small subunit methyltransferase B"/>
    <property type="match status" value="1"/>
</dbReference>
<dbReference type="FunFam" id="1.10.940.10:FF:000002">
    <property type="entry name" value="Ribosomal RNA small subunit methyltransferase B"/>
    <property type="match status" value="1"/>
</dbReference>
<dbReference type="FunFam" id="3.30.70.1170:FF:000002">
    <property type="entry name" value="Ribosomal RNA small subunit methyltransferase B"/>
    <property type="match status" value="1"/>
</dbReference>
<dbReference type="FunFam" id="3.40.50.150:FF:000022">
    <property type="entry name" value="Ribosomal RNA small subunit methyltransferase B"/>
    <property type="match status" value="1"/>
</dbReference>
<dbReference type="Gene3D" id="1.10.287.730">
    <property type="entry name" value="Helix hairpin bin"/>
    <property type="match status" value="1"/>
</dbReference>
<dbReference type="Gene3D" id="1.10.940.10">
    <property type="entry name" value="NusB-like"/>
    <property type="match status" value="1"/>
</dbReference>
<dbReference type="Gene3D" id="3.30.70.1170">
    <property type="entry name" value="Sun protein, domain 3"/>
    <property type="match status" value="1"/>
</dbReference>
<dbReference type="Gene3D" id="3.40.50.150">
    <property type="entry name" value="Vaccinia Virus protein VP39"/>
    <property type="match status" value="1"/>
</dbReference>
<dbReference type="HAMAP" id="MF_01856">
    <property type="entry name" value="16SrRNA_methyltr_B"/>
    <property type="match status" value="1"/>
</dbReference>
<dbReference type="InterPro" id="IPR049560">
    <property type="entry name" value="MeTrfase_RsmB-F_NOP2_cat"/>
</dbReference>
<dbReference type="InterPro" id="IPR001678">
    <property type="entry name" value="MeTrfase_RsmB-F_NOP2_dom"/>
</dbReference>
<dbReference type="InterPro" id="IPR035926">
    <property type="entry name" value="NusB-like_sf"/>
</dbReference>
<dbReference type="InterPro" id="IPR006027">
    <property type="entry name" value="NusB_RsmB_TIM44"/>
</dbReference>
<dbReference type="InterPro" id="IPR023267">
    <property type="entry name" value="RCMT"/>
</dbReference>
<dbReference type="InterPro" id="IPR004573">
    <property type="entry name" value="rRNA_ssu_MeTfrase_B"/>
</dbReference>
<dbReference type="InterPro" id="IPR023541">
    <property type="entry name" value="rRNA_ssu_MeTfrase_B_ent"/>
</dbReference>
<dbReference type="InterPro" id="IPR054728">
    <property type="entry name" value="RsmB-like_ferredoxin"/>
</dbReference>
<dbReference type="InterPro" id="IPR048019">
    <property type="entry name" value="RsmB-like_N"/>
</dbReference>
<dbReference type="InterPro" id="IPR018314">
    <property type="entry name" value="RsmB/NOL1/NOP2-like_CS"/>
</dbReference>
<dbReference type="InterPro" id="IPR029063">
    <property type="entry name" value="SAM-dependent_MTases_sf"/>
</dbReference>
<dbReference type="NCBIfam" id="NF008149">
    <property type="entry name" value="PRK10901.1"/>
    <property type="match status" value="1"/>
</dbReference>
<dbReference type="NCBIfam" id="NF011494">
    <property type="entry name" value="PRK14902.1"/>
    <property type="match status" value="1"/>
</dbReference>
<dbReference type="NCBIfam" id="TIGR00563">
    <property type="entry name" value="rsmB"/>
    <property type="match status" value="1"/>
</dbReference>
<dbReference type="PANTHER" id="PTHR22807:SF61">
    <property type="entry name" value="NOL1_NOP2_SUN FAMILY PROTEIN _ ANTITERMINATION NUSB DOMAIN-CONTAINING PROTEIN"/>
    <property type="match status" value="1"/>
</dbReference>
<dbReference type="PANTHER" id="PTHR22807">
    <property type="entry name" value="NOP2 YEAST -RELATED NOL1/NOP2/FMU SUN DOMAIN-CONTAINING"/>
    <property type="match status" value="1"/>
</dbReference>
<dbReference type="Pfam" id="PF01189">
    <property type="entry name" value="Methyltr_RsmB-F"/>
    <property type="match status" value="1"/>
</dbReference>
<dbReference type="Pfam" id="PF01029">
    <property type="entry name" value="NusB"/>
    <property type="match status" value="1"/>
</dbReference>
<dbReference type="Pfam" id="PF22458">
    <property type="entry name" value="RsmF-B_ferredox"/>
    <property type="match status" value="1"/>
</dbReference>
<dbReference type="PRINTS" id="PR02008">
    <property type="entry name" value="RCMTFAMILY"/>
</dbReference>
<dbReference type="SUPFAM" id="SSF48013">
    <property type="entry name" value="NusB-like"/>
    <property type="match status" value="1"/>
</dbReference>
<dbReference type="SUPFAM" id="SSF53335">
    <property type="entry name" value="S-adenosyl-L-methionine-dependent methyltransferases"/>
    <property type="match status" value="1"/>
</dbReference>
<dbReference type="PROSITE" id="PS01153">
    <property type="entry name" value="NOL1_NOP2_SUN"/>
    <property type="match status" value="1"/>
</dbReference>
<dbReference type="PROSITE" id="PS51686">
    <property type="entry name" value="SAM_MT_RSMB_NOP"/>
    <property type="match status" value="1"/>
</dbReference>
<protein>
    <recommendedName>
        <fullName evidence="1">Ribosomal RNA small subunit methyltransferase B</fullName>
        <ecNumber evidence="1">2.1.1.176</ecNumber>
    </recommendedName>
    <alternativeName>
        <fullName evidence="1">16S rRNA m5C967 methyltransferase</fullName>
    </alternativeName>
    <alternativeName>
        <fullName evidence="1">rRNA (cytosine-C(5)-)-methyltransferase RsmB</fullName>
    </alternativeName>
</protein>
<name>RSMB_YERP3</name>
<feature type="chain" id="PRO_0000366189" description="Ribosomal RNA small subunit methyltransferase B">
    <location>
        <begin position="1"/>
        <end position="429"/>
    </location>
</feature>
<feature type="active site" description="Nucleophile" evidence="1">
    <location>
        <position position="375"/>
    </location>
</feature>
<feature type="binding site" evidence="1">
    <location>
        <begin position="254"/>
        <end position="260"/>
    </location>
    <ligand>
        <name>S-adenosyl-L-methionine</name>
        <dbReference type="ChEBI" id="CHEBI:59789"/>
    </ligand>
</feature>
<feature type="binding site" evidence="1">
    <location>
        <position position="277"/>
    </location>
    <ligand>
        <name>S-adenosyl-L-methionine</name>
        <dbReference type="ChEBI" id="CHEBI:59789"/>
    </ligand>
</feature>
<feature type="binding site" evidence="1">
    <location>
        <position position="303"/>
    </location>
    <ligand>
        <name>S-adenosyl-L-methionine</name>
        <dbReference type="ChEBI" id="CHEBI:59789"/>
    </ligand>
</feature>
<feature type="binding site" evidence="1">
    <location>
        <position position="322"/>
    </location>
    <ligand>
        <name>S-adenosyl-L-methionine</name>
        <dbReference type="ChEBI" id="CHEBI:59789"/>
    </ligand>
</feature>
<keyword id="KW-0963">Cytoplasm</keyword>
<keyword id="KW-0489">Methyltransferase</keyword>
<keyword id="KW-0694">RNA-binding</keyword>
<keyword id="KW-0698">rRNA processing</keyword>
<keyword id="KW-0949">S-adenosyl-L-methionine</keyword>
<keyword id="KW-0808">Transferase</keyword>